<proteinExistence type="evidence at protein level"/>
<keyword id="KW-0998">Cell outer membrane</keyword>
<keyword id="KW-0449">Lipoprotein</keyword>
<keyword id="KW-0472">Membrane</keyword>
<keyword id="KW-0564">Palmitate</keyword>
<keyword id="KW-0732">Signal</keyword>
<keyword id="KW-0843">Virulence</keyword>
<gene>
    <name evidence="4" type="primary">tbpB</name>
    <name type="ORF">EA1_03415</name>
</gene>
<organism>
    <name type="scientific">Moraxella catarrhalis</name>
    <name type="common">Branhamella catarrhalis</name>
    <dbReference type="NCBI Taxonomy" id="480"/>
    <lineage>
        <taxon>Bacteria</taxon>
        <taxon>Pseudomonadati</taxon>
        <taxon>Pseudomonadota</taxon>
        <taxon>Gammaproteobacteria</taxon>
        <taxon>Moraxellales</taxon>
        <taxon>Moraxellaceae</taxon>
        <taxon>Moraxella</taxon>
    </lineage>
</organism>
<name>TBPB_MORCA</name>
<sequence length="706" mass="76351">MKHIPLTTLCVAISAVLLTACGGSGGSNPPAPTPIPNASGSGNTGNTGNAGGTDNTANAGNTGGASSGTGSANTPEPKYQDVPTDKNEKEQVSPIQEPAMGYGMALSKINLHNRQDTPLDEKNIITLDGKKQVAEGKKSPLPFSLDVENKLLDGYIAKMDKADKNAIRRRIESENKAKPLSEAELAEKIKEAVRKSYEFQQVMTSLENKIFHSNDGTTKATTRDLQYVDYGYYLANDANYLTVKTDKPKLWNSGPVGGVFYNGSTTAKELPTQDAVKYKGHWDFMTDVANKGNRFSEVKGTRQAGWWYGASSKDEYNRLLTDEKNKPDGYNGEYGHSSEFTVNFKEKKLTGGLFSNLQDSHKQKVTKTKRYDIDANIHGNRFRGSAIASDKEKDSETKHPFTSDAKDRLEGGFYGPKGEELAGKFLTDDNKLFGVFGAKQESKADKTEAILDAYALGAFNKNDANTFTPFTKKQLDNFGNAKKLVLGSTVINLVSTDATKNEFTEDKPKSATNKAGETLMVNDKVSVKTYGYGRNFEYLKFGELSVGGSHSVFLQGERTATTGDKAVPTEGKAKYLGNWVGYITGTGTGKSFNEAQDIADFDIDFKNKTVNGKLTTKGRTDPVFNITGEISGNGWTGKASTAKADAGGYNIDSNGTNKSIVIRDADVTGGFYGPNATEMGGSFTHNTNDSKASVVFGTKRQEEVKP</sequence>
<protein>
    <recommendedName>
        <fullName evidence="5">Transferrin-binding protein B</fullName>
        <shortName evidence="5">TbpB</shortName>
    </recommendedName>
</protein>
<evidence type="ECO:0000255" key="1">
    <source>
        <dbReference type="PROSITE-ProRule" id="PRU00303"/>
    </source>
</evidence>
<evidence type="ECO:0000256" key="2">
    <source>
        <dbReference type="SAM" id="MobiDB-lite"/>
    </source>
</evidence>
<evidence type="ECO:0000269" key="3">
    <source>
    </source>
</evidence>
<evidence type="ECO:0000303" key="4">
    <source>
    </source>
</evidence>
<evidence type="ECO:0000303" key="5">
    <source>
    </source>
</evidence>
<evidence type="ECO:0000305" key="6"/>
<evidence type="ECO:0000305" key="7">
    <source>
    </source>
</evidence>
<feature type="signal peptide" evidence="1">
    <location>
        <begin position="1"/>
        <end position="20"/>
    </location>
</feature>
<feature type="chain" id="PRO_0000450812" description="Transferrin-binding protein B" evidence="1">
    <location>
        <begin position="21"/>
        <end position="706"/>
    </location>
</feature>
<feature type="region of interest" description="Disordered" evidence="2">
    <location>
        <begin position="26"/>
        <end position="92"/>
    </location>
</feature>
<feature type="region of interest" description="Disordered" evidence="2">
    <location>
        <begin position="384"/>
        <end position="412"/>
    </location>
</feature>
<feature type="compositionally biased region" description="Gly residues" evidence="2">
    <location>
        <begin position="42"/>
        <end position="51"/>
    </location>
</feature>
<feature type="compositionally biased region" description="Basic and acidic residues" evidence="2">
    <location>
        <begin position="389"/>
        <end position="410"/>
    </location>
</feature>
<feature type="lipid moiety-binding region" description="N-palmitoyl cysteine" evidence="1">
    <location>
        <position position="21"/>
    </location>
</feature>
<feature type="lipid moiety-binding region" description="S-diacylglycerol cysteine" evidence="1">
    <location>
        <position position="21"/>
    </location>
</feature>
<reference key="1">
    <citation type="journal article" date="2011" name="BMC Genomics">
        <title>Comparative analysis and supragenome modeling of twelve Moraxella catarrhalis clinical isolates.</title>
        <authorList>
            <person name="Davie J.J."/>
            <person name="Earl J."/>
            <person name="de Vries S.P."/>
            <person name="Ahmed A."/>
            <person name="Hu F.Z."/>
            <person name="Bootsma H.J."/>
            <person name="Stol K."/>
            <person name="Hermans P.W."/>
            <person name="Wadowsky R.M."/>
            <person name="Ehrlich G.D."/>
            <person name="Hays J.P."/>
            <person name="Campagnari A.A."/>
        </authorList>
    </citation>
    <scope>NUCLEOTIDE SEQUENCE [LARGE SCALE GENOMIC DNA]</scope>
    <source>
        <strain>O53E</strain>
    </source>
</reference>
<reference key="2">
    <citation type="journal article" date="2017" name="Front. Cell. Infect. Microbiol.">
        <title>Identification of a Large Family of Slam-Dependent Surface Lipoproteins in Gram-Negative Bacteria.</title>
        <authorList>
            <person name="Hooda Y."/>
            <person name="Lai C.C.L."/>
            <person name="Moraes T.F."/>
        </authorList>
    </citation>
    <scope>TRANSFERRIN-BINDING</scope>
    <scope>SUBCELLULAR LOCATION</scope>
    <source>
        <strain>O53E</strain>
    </source>
</reference>
<accession>P0DTW7</accession>
<dbReference type="EMBL" id="AERL01000018">
    <property type="protein sequence ID" value="EGE27321.1"/>
    <property type="molecule type" value="Genomic_DNA"/>
</dbReference>
<dbReference type="SMR" id="P0DTW7"/>
<dbReference type="GO" id="GO:0009279">
    <property type="term" value="C:cell outer membrane"/>
    <property type="evidence" value="ECO:0007669"/>
    <property type="project" value="UniProtKB-SubCell"/>
</dbReference>
<dbReference type="GO" id="GO:0009986">
    <property type="term" value="C:cell surface"/>
    <property type="evidence" value="ECO:0007669"/>
    <property type="project" value="UniProtKB-SubCell"/>
</dbReference>
<dbReference type="Gene3D" id="2.40.128.240">
    <property type="match status" value="1"/>
</dbReference>
<dbReference type="Gene3D" id="2.40.128.250">
    <property type="match status" value="1"/>
</dbReference>
<dbReference type="Gene3D" id="2.40.160.90">
    <property type="match status" value="2"/>
</dbReference>
<dbReference type="InterPro" id="IPR011250">
    <property type="entry name" value="OMP/PagP_b-brl"/>
</dbReference>
<dbReference type="InterPro" id="IPR001677">
    <property type="entry name" value="TbpB_B_D"/>
</dbReference>
<dbReference type="InterPro" id="IPR035316">
    <property type="entry name" value="TbpB_C-lobe"/>
</dbReference>
<dbReference type="InterPro" id="IPR038197">
    <property type="entry name" value="TbpB_C-lobe_sf"/>
</dbReference>
<dbReference type="InterPro" id="IPR035313">
    <property type="entry name" value="TbpB_N-lobe"/>
</dbReference>
<dbReference type="InterPro" id="IPR038669">
    <property type="entry name" value="TbpB_N-lobe_sf"/>
</dbReference>
<dbReference type="Pfam" id="PF17484">
    <property type="entry name" value="TbpB_A"/>
    <property type="match status" value="1"/>
</dbReference>
<dbReference type="Pfam" id="PF01298">
    <property type="entry name" value="TbpB_B_D"/>
    <property type="match status" value="2"/>
</dbReference>
<dbReference type="Pfam" id="PF17483">
    <property type="entry name" value="TbpB_C"/>
    <property type="match status" value="1"/>
</dbReference>
<dbReference type="SUPFAM" id="SSF56925">
    <property type="entry name" value="OMPA-like"/>
    <property type="match status" value="2"/>
</dbReference>
<dbReference type="PROSITE" id="PS51257">
    <property type="entry name" value="PROKAR_LIPOPROTEIN"/>
    <property type="match status" value="1"/>
</dbReference>
<comment type="function">
    <text evidence="6">Moraxella acquires iron by extracting it from serum transferrin (TF) in its human host. Acts as a transferrin receptor and is required for transferrin utilization.</text>
</comment>
<comment type="subcellular location">
    <subcellularLocation>
        <location evidence="1 7">Cell outer membrane</location>
        <topology evidence="1">Lipid-anchor</topology>
    </subcellularLocation>
    <subcellularLocation>
        <location evidence="3">Cell surface</location>
    </subcellularLocation>
    <text evidence="3">When expressed in E.coli.</text>
</comment>
<comment type="similarity">
    <text evidence="6">Belongs to the TbpB family.</text>
</comment>